<proteinExistence type="inferred from homology"/>
<organism>
    <name type="scientific">Burkholderia pseudomallei (strain 1106a)</name>
    <dbReference type="NCBI Taxonomy" id="357348"/>
    <lineage>
        <taxon>Bacteria</taxon>
        <taxon>Pseudomonadati</taxon>
        <taxon>Pseudomonadota</taxon>
        <taxon>Betaproteobacteria</taxon>
        <taxon>Burkholderiales</taxon>
        <taxon>Burkholderiaceae</taxon>
        <taxon>Burkholderia</taxon>
        <taxon>pseudomallei group</taxon>
    </lineage>
</organism>
<protein>
    <recommendedName>
        <fullName evidence="1">Threonine--tRNA ligase</fullName>
        <ecNumber evidence="1">6.1.1.3</ecNumber>
    </recommendedName>
    <alternativeName>
        <fullName evidence="1">Threonyl-tRNA synthetase</fullName>
        <shortName evidence="1">ThrRS</shortName>
    </alternativeName>
</protein>
<gene>
    <name evidence="1" type="primary">thrS</name>
    <name type="ordered locus">BURPS1106A_1735</name>
</gene>
<dbReference type="EC" id="6.1.1.3" evidence="1"/>
<dbReference type="EMBL" id="CP000572">
    <property type="protein sequence ID" value="ABN90684.1"/>
    <property type="molecule type" value="Genomic_DNA"/>
</dbReference>
<dbReference type="RefSeq" id="WP_004191232.1">
    <property type="nucleotide sequence ID" value="NC_009076.1"/>
</dbReference>
<dbReference type="SMR" id="A3NUI4"/>
<dbReference type="GeneID" id="93060046"/>
<dbReference type="KEGG" id="bpl:BURPS1106A_1735"/>
<dbReference type="HOGENOM" id="CLU_008554_0_1_4"/>
<dbReference type="Proteomes" id="UP000006738">
    <property type="component" value="Chromosome I"/>
</dbReference>
<dbReference type="GO" id="GO:0005829">
    <property type="term" value="C:cytosol"/>
    <property type="evidence" value="ECO:0007669"/>
    <property type="project" value="TreeGrafter"/>
</dbReference>
<dbReference type="GO" id="GO:0005524">
    <property type="term" value="F:ATP binding"/>
    <property type="evidence" value="ECO:0007669"/>
    <property type="project" value="UniProtKB-UniRule"/>
</dbReference>
<dbReference type="GO" id="GO:0046872">
    <property type="term" value="F:metal ion binding"/>
    <property type="evidence" value="ECO:0007669"/>
    <property type="project" value="UniProtKB-KW"/>
</dbReference>
<dbReference type="GO" id="GO:0004829">
    <property type="term" value="F:threonine-tRNA ligase activity"/>
    <property type="evidence" value="ECO:0007669"/>
    <property type="project" value="UniProtKB-UniRule"/>
</dbReference>
<dbReference type="GO" id="GO:0000049">
    <property type="term" value="F:tRNA binding"/>
    <property type="evidence" value="ECO:0007669"/>
    <property type="project" value="UniProtKB-KW"/>
</dbReference>
<dbReference type="GO" id="GO:0006435">
    <property type="term" value="P:threonyl-tRNA aminoacylation"/>
    <property type="evidence" value="ECO:0007669"/>
    <property type="project" value="UniProtKB-UniRule"/>
</dbReference>
<dbReference type="CDD" id="cd01667">
    <property type="entry name" value="TGS_ThrRS"/>
    <property type="match status" value="1"/>
</dbReference>
<dbReference type="CDD" id="cd00860">
    <property type="entry name" value="ThrRS_anticodon"/>
    <property type="match status" value="1"/>
</dbReference>
<dbReference type="CDD" id="cd00771">
    <property type="entry name" value="ThrRS_core"/>
    <property type="match status" value="1"/>
</dbReference>
<dbReference type="FunFam" id="3.10.20.30:FF:000005">
    <property type="entry name" value="Threonine--tRNA ligase"/>
    <property type="match status" value="1"/>
</dbReference>
<dbReference type="FunFam" id="3.30.54.20:FF:000002">
    <property type="entry name" value="Threonine--tRNA ligase"/>
    <property type="match status" value="1"/>
</dbReference>
<dbReference type="FunFam" id="3.30.930.10:FF:000002">
    <property type="entry name" value="Threonine--tRNA ligase"/>
    <property type="match status" value="1"/>
</dbReference>
<dbReference type="FunFam" id="3.40.50.800:FF:000001">
    <property type="entry name" value="Threonine--tRNA ligase"/>
    <property type="match status" value="1"/>
</dbReference>
<dbReference type="FunFam" id="3.30.980.10:FF:000005">
    <property type="entry name" value="Threonyl-tRNA synthetase, mitochondrial"/>
    <property type="match status" value="1"/>
</dbReference>
<dbReference type="Gene3D" id="3.10.20.30">
    <property type="match status" value="1"/>
</dbReference>
<dbReference type="Gene3D" id="3.30.54.20">
    <property type="match status" value="1"/>
</dbReference>
<dbReference type="Gene3D" id="3.40.50.800">
    <property type="entry name" value="Anticodon-binding domain"/>
    <property type="match status" value="1"/>
</dbReference>
<dbReference type="Gene3D" id="3.30.930.10">
    <property type="entry name" value="Bira Bifunctional Protein, Domain 2"/>
    <property type="match status" value="1"/>
</dbReference>
<dbReference type="Gene3D" id="3.30.980.10">
    <property type="entry name" value="Threonyl-trna Synthetase, Chain A, domain 2"/>
    <property type="match status" value="1"/>
</dbReference>
<dbReference type="HAMAP" id="MF_00184">
    <property type="entry name" value="Thr_tRNA_synth"/>
    <property type="match status" value="1"/>
</dbReference>
<dbReference type="InterPro" id="IPR002314">
    <property type="entry name" value="aa-tRNA-synt_IIb"/>
</dbReference>
<dbReference type="InterPro" id="IPR006195">
    <property type="entry name" value="aa-tRNA-synth_II"/>
</dbReference>
<dbReference type="InterPro" id="IPR045864">
    <property type="entry name" value="aa-tRNA-synth_II/BPL/LPL"/>
</dbReference>
<dbReference type="InterPro" id="IPR004154">
    <property type="entry name" value="Anticodon-bd"/>
</dbReference>
<dbReference type="InterPro" id="IPR036621">
    <property type="entry name" value="Anticodon-bd_dom_sf"/>
</dbReference>
<dbReference type="InterPro" id="IPR012675">
    <property type="entry name" value="Beta-grasp_dom_sf"/>
</dbReference>
<dbReference type="InterPro" id="IPR004095">
    <property type="entry name" value="TGS"/>
</dbReference>
<dbReference type="InterPro" id="IPR012676">
    <property type="entry name" value="TGS-like"/>
</dbReference>
<dbReference type="InterPro" id="IPR002320">
    <property type="entry name" value="Thr-tRNA-ligase_IIa"/>
</dbReference>
<dbReference type="InterPro" id="IPR018163">
    <property type="entry name" value="Thr/Ala-tRNA-synth_IIc_edit"/>
</dbReference>
<dbReference type="InterPro" id="IPR047246">
    <property type="entry name" value="ThrRS_anticodon"/>
</dbReference>
<dbReference type="InterPro" id="IPR033728">
    <property type="entry name" value="ThrRS_core"/>
</dbReference>
<dbReference type="InterPro" id="IPR012947">
    <property type="entry name" value="tRNA_SAD"/>
</dbReference>
<dbReference type="NCBIfam" id="TIGR00418">
    <property type="entry name" value="thrS"/>
    <property type="match status" value="1"/>
</dbReference>
<dbReference type="PANTHER" id="PTHR11451:SF44">
    <property type="entry name" value="THREONINE--TRNA LIGASE, CHLOROPLASTIC_MITOCHONDRIAL 2"/>
    <property type="match status" value="1"/>
</dbReference>
<dbReference type="PANTHER" id="PTHR11451">
    <property type="entry name" value="THREONINE-TRNA LIGASE"/>
    <property type="match status" value="1"/>
</dbReference>
<dbReference type="Pfam" id="PF03129">
    <property type="entry name" value="HGTP_anticodon"/>
    <property type="match status" value="1"/>
</dbReference>
<dbReference type="Pfam" id="PF02824">
    <property type="entry name" value="TGS"/>
    <property type="match status" value="1"/>
</dbReference>
<dbReference type="Pfam" id="PF00587">
    <property type="entry name" value="tRNA-synt_2b"/>
    <property type="match status" value="1"/>
</dbReference>
<dbReference type="Pfam" id="PF07973">
    <property type="entry name" value="tRNA_SAD"/>
    <property type="match status" value="1"/>
</dbReference>
<dbReference type="PRINTS" id="PR01047">
    <property type="entry name" value="TRNASYNTHTHR"/>
</dbReference>
<dbReference type="SMART" id="SM00863">
    <property type="entry name" value="tRNA_SAD"/>
    <property type="match status" value="1"/>
</dbReference>
<dbReference type="SUPFAM" id="SSF52954">
    <property type="entry name" value="Class II aaRS ABD-related"/>
    <property type="match status" value="1"/>
</dbReference>
<dbReference type="SUPFAM" id="SSF55681">
    <property type="entry name" value="Class II aaRS and biotin synthetases"/>
    <property type="match status" value="1"/>
</dbReference>
<dbReference type="SUPFAM" id="SSF81271">
    <property type="entry name" value="TGS-like"/>
    <property type="match status" value="1"/>
</dbReference>
<dbReference type="SUPFAM" id="SSF55186">
    <property type="entry name" value="ThrRS/AlaRS common domain"/>
    <property type="match status" value="1"/>
</dbReference>
<dbReference type="PROSITE" id="PS50862">
    <property type="entry name" value="AA_TRNA_LIGASE_II"/>
    <property type="match status" value="1"/>
</dbReference>
<dbReference type="PROSITE" id="PS51880">
    <property type="entry name" value="TGS"/>
    <property type="match status" value="1"/>
</dbReference>
<accession>A3NUI4</accession>
<sequence>MVSIRLPDGSVRQYEHPVTVAEVAASIGPGLAKAALGGKLDGELVDTSALIDRDASLAIVTDKDADGLDIIRHSTAHLLAYAVKELHPDAQVTIGPVIDNGFYYDFSYHRPFTPEDLEAIEKRMQELAKRDEPVTRRVVSRDEAVSYFRSIGEKYKAEIIESIPASDEIKLYSHGSFTDLCRGPHVPSTGKLKVFKLMKVAGAYWRGDSKNEQLQRIYGTAWTRKEDQDAYLHMLEEAEKRDHRKLGKQLDLFHIQEEAPGMVFWHPKGWTLWQQVEQYMRRRLDAAGYLEIKTPMIMDRSLWEASGHWQNYRENMFTTESEKRDYAIKPMNCPGHVQVFKHGLRSYRDLPLRYAEFGSCHRNEASGALHGLMRVRGFVQDDAHIFCTEDQINSEAIAFNKLAMSVYEDFGFDRIDIKLSLRPEQRMGSDETWDHAEEGLRNALKACGLEWEELPGEGAFYGPKIEYHIKDALGRSWQCGTLQLDMMLPERLGAEYVAEDNSRRRPVMLHRAIVGSMERFLGILIEHHAGAMPVWLAPAHAVVLNIAESQAEYARTVAQSLQKQGLRVSADLRNEKISYKIREHTLEKVPYLLVVGDKEREAQTVAVRARGGVDLGVMPVEAFVERLREDIQAFK</sequence>
<reference key="1">
    <citation type="journal article" date="2010" name="Genome Biol. Evol.">
        <title>Continuing evolution of Burkholderia mallei through genome reduction and large-scale rearrangements.</title>
        <authorList>
            <person name="Losada L."/>
            <person name="Ronning C.M."/>
            <person name="DeShazer D."/>
            <person name="Woods D."/>
            <person name="Fedorova N."/>
            <person name="Kim H.S."/>
            <person name="Shabalina S.A."/>
            <person name="Pearson T.R."/>
            <person name="Brinkac L."/>
            <person name="Tan P."/>
            <person name="Nandi T."/>
            <person name="Crabtree J."/>
            <person name="Badger J."/>
            <person name="Beckstrom-Sternberg S."/>
            <person name="Saqib M."/>
            <person name="Schutzer S.E."/>
            <person name="Keim P."/>
            <person name="Nierman W.C."/>
        </authorList>
    </citation>
    <scope>NUCLEOTIDE SEQUENCE [LARGE SCALE GENOMIC DNA]</scope>
    <source>
        <strain>1106a</strain>
    </source>
</reference>
<evidence type="ECO:0000255" key="1">
    <source>
        <dbReference type="HAMAP-Rule" id="MF_00184"/>
    </source>
</evidence>
<evidence type="ECO:0000255" key="2">
    <source>
        <dbReference type="PROSITE-ProRule" id="PRU01228"/>
    </source>
</evidence>
<feature type="chain" id="PRO_1000020355" description="Threonine--tRNA ligase">
    <location>
        <begin position="1"/>
        <end position="635"/>
    </location>
</feature>
<feature type="domain" description="TGS" evidence="2">
    <location>
        <begin position="1"/>
        <end position="61"/>
    </location>
</feature>
<feature type="region of interest" description="Catalytic" evidence="1">
    <location>
        <begin position="242"/>
        <end position="533"/>
    </location>
</feature>
<feature type="binding site" evidence="1">
    <location>
        <position position="333"/>
    </location>
    <ligand>
        <name>Zn(2+)</name>
        <dbReference type="ChEBI" id="CHEBI:29105"/>
    </ligand>
</feature>
<feature type="binding site" evidence="1">
    <location>
        <position position="384"/>
    </location>
    <ligand>
        <name>Zn(2+)</name>
        <dbReference type="ChEBI" id="CHEBI:29105"/>
    </ligand>
</feature>
<feature type="binding site" evidence="1">
    <location>
        <position position="510"/>
    </location>
    <ligand>
        <name>Zn(2+)</name>
        <dbReference type="ChEBI" id="CHEBI:29105"/>
    </ligand>
</feature>
<name>SYT_BURP0</name>
<keyword id="KW-0030">Aminoacyl-tRNA synthetase</keyword>
<keyword id="KW-0067">ATP-binding</keyword>
<keyword id="KW-0963">Cytoplasm</keyword>
<keyword id="KW-0436">Ligase</keyword>
<keyword id="KW-0479">Metal-binding</keyword>
<keyword id="KW-0547">Nucleotide-binding</keyword>
<keyword id="KW-0648">Protein biosynthesis</keyword>
<keyword id="KW-0694">RNA-binding</keyword>
<keyword id="KW-0820">tRNA-binding</keyword>
<keyword id="KW-0862">Zinc</keyword>
<comment type="function">
    <text evidence="1">Catalyzes the attachment of threonine to tRNA(Thr) in a two-step reaction: L-threonine is first activated by ATP to form Thr-AMP and then transferred to the acceptor end of tRNA(Thr). Also edits incorrectly charged L-seryl-tRNA(Thr).</text>
</comment>
<comment type="catalytic activity">
    <reaction evidence="1">
        <text>tRNA(Thr) + L-threonine + ATP = L-threonyl-tRNA(Thr) + AMP + diphosphate + H(+)</text>
        <dbReference type="Rhea" id="RHEA:24624"/>
        <dbReference type="Rhea" id="RHEA-COMP:9670"/>
        <dbReference type="Rhea" id="RHEA-COMP:9704"/>
        <dbReference type="ChEBI" id="CHEBI:15378"/>
        <dbReference type="ChEBI" id="CHEBI:30616"/>
        <dbReference type="ChEBI" id="CHEBI:33019"/>
        <dbReference type="ChEBI" id="CHEBI:57926"/>
        <dbReference type="ChEBI" id="CHEBI:78442"/>
        <dbReference type="ChEBI" id="CHEBI:78534"/>
        <dbReference type="ChEBI" id="CHEBI:456215"/>
        <dbReference type="EC" id="6.1.1.3"/>
    </reaction>
</comment>
<comment type="cofactor">
    <cofactor evidence="1">
        <name>Zn(2+)</name>
        <dbReference type="ChEBI" id="CHEBI:29105"/>
    </cofactor>
    <text evidence="1">Binds 1 zinc ion per subunit.</text>
</comment>
<comment type="subunit">
    <text evidence="1">Homodimer.</text>
</comment>
<comment type="subcellular location">
    <subcellularLocation>
        <location evidence="1">Cytoplasm</location>
    </subcellularLocation>
</comment>
<comment type="similarity">
    <text evidence="1">Belongs to the class-II aminoacyl-tRNA synthetase family.</text>
</comment>